<reference key="1">
    <citation type="journal article" date="2008" name="Genome Res.">
        <title>Comparative genome analysis of Salmonella enteritidis PT4 and Salmonella gallinarum 287/91 provides insights into evolutionary and host adaptation pathways.</title>
        <authorList>
            <person name="Thomson N.R."/>
            <person name="Clayton D.J."/>
            <person name="Windhorst D."/>
            <person name="Vernikos G."/>
            <person name="Davidson S."/>
            <person name="Churcher C."/>
            <person name="Quail M.A."/>
            <person name="Stevens M."/>
            <person name="Jones M.A."/>
            <person name="Watson M."/>
            <person name="Barron A."/>
            <person name="Layton A."/>
            <person name="Pickard D."/>
            <person name="Kingsley R.A."/>
            <person name="Bignell A."/>
            <person name="Clark L."/>
            <person name="Harris B."/>
            <person name="Ormond D."/>
            <person name="Abdellah Z."/>
            <person name="Brooks K."/>
            <person name="Cherevach I."/>
            <person name="Chillingworth T."/>
            <person name="Woodward J."/>
            <person name="Norberczak H."/>
            <person name="Lord A."/>
            <person name="Arrowsmith C."/>
            <person name="Jagels K."/>
            <person name="Moule S."/>
            <person name="Mungall K."/>
            <person name="Saunders M."/>
            <person name="Whitehead S."/>
            <person name="Chabalgoity J.A."/>
            <person name="Maskell D."/>
            <person name="Humphreys T."/>
            <person name="Roberts M."/>
            <person name="Barrow P.A."/>
            <person name="Dougan G."/>
            <person name="Parkhill J."/>
        </authorList>
    </citation>
    <scope>NUCLEOTIDE SEQUENCE [LARGE SCALE GENOMIC DNA]</scope>
    <source>
        <strain>P125109</strain>
    </source>
</reference>
<proteinExistence type="inferred from homology"/>
<protein>
    <recommendedName>
        <fullName evidence="1">UPF0178 protein YaiI</fullName>
    </recommendedName>
</protein>
<sequence>MTIWVDADACPNVIKEILYRAAERMQLPLILVANQALRVPPSRFIRTLRVAAGFDVADNEIVRQCKAGDLVITADIPLAAEVLEKGAAVLNPRGERYSDATIRERLTMRDFMDTLRASGVQTGGPNTLSPRDRQHFAAELDKWWLESQRKK</sequence>
<accession>B5QTD6</accession>
<dbReference type="EMBL" id="AM933172">
    <property type="protein sequence ID" value="CAR31956.1"/>
    <property type="molecule type" value="Genomic_DNA"/>
</dbReference>
<dbReference type="RefSeq" id="WP_000158143.1">
    <property type="nucleotide sequence ID" value="NC_011294.1"/>
</dbReference>
<dbReference type="KEGG" id="set:SEN0370"/>
<dbReference type="HOGENOM" id="CLU_106619_1_0_6"/>
<dbReference type="Proteomes" id="UP000000613">
    <property type="component" value="Chromosome"/>
</dbReference>
<dbReference type="CDD" id="cd18720">
    <property type="entry name" value="PIN_YqxD-like"/>
    <property type="match status" value="1"/>
</dbReference>
<dbReference type="HAMAP" id="MF_00489">
    <property type="entry name" value="UPF0178"/>
    <property type="match status" value="1"/>
</dbReference>
<dbReference type="InterPro" id="IPR003791">
    <property type="entry name" value="UPF0178"/>
</dbReference>
<dbReference type="NCBIfam" id="NF001095">
    <property type="entry name" value="PRK00124.1"/>
    <property type="match status" value="1"/>
</dbReference>
<dbReference type="PANTHER" id="PTHR35146">
    <property type="entry name" value="UPF0178 PROTEIN YAII"/>
    <property type="match status" value="1"/>
</dbReference>
<dbReference type="PANTHER" id="PTHR35146:SF1">
    <property type="entry name" value="UPF0178 PROTEIN YAII"/>
    <property type="match status" value="1"/>
</dbReference>
<dbReference type="Pfam" id="PF02639">
    <property type="entry name" value="DUF188"/>
    <property type="match status" value="1"/>
</dbReference>
<feature type="chain" id="PRO_1000126209" description="UPF0178 protein YaiI">
    <location>
        <begin position="1"/>
        <end position="151"/>
    </location>
</feature>
<comment type="similarity">
    <text evidence="1">Belongs to the UPF0178 family.</text>
</comment>
<organism>
    <name type="scientific">Salmonella enteritidis PT4 (strain P125109)</name>
    <dbReference type="NCBI Taxonomy" id="550537"/>
    <lineage>
        <taxon>Bacteria</taxon>
        <taxon>Pseudomonadati</taxon>
        <taxon>Pseudomonadota</taxon>
        <taxon>Gammaproteobacteria</taxon>
        <taxon>Enterobacterales</taxon>
        <taxon>Enterobacteriaceae</taxon>
        <taxon>Salmonella</taxon>
    </lineage>
</organism>
<evidence type="ECO:0000255" key="1">
    <source>
        <dbReference type="HAMAP-Rule" id="MF_00489"/>
    </source>
</evidence>
<name>YAII_SALEP</name>
<gene>
    <name evidence="1" type="primary">yaiI</name>
    <name type="ordered locus">SEN0370</name>
</gene>